<sequence length="437" mass="48768">MASPSSFTYCCPPSSSPIWSEPLYSLRPEHARERLQDDSVETVTSIEQAKVEEKIQEVFSSYKFNHLVPRLVLQREKHFHYLKRGLRQLTDAYECLDASRPWLCYWILHSLELLDEPIPQMVATDVCQFLELCQSPEGGFGGGPGQYPHLAPTYAAVNALCIIGTEEAYDVINREKLLQYLYSLKQPDGSFLMHDGGEVDVRSAYCAASVASLTNIITPDLFEGTAEWIARCQNWEGGIGGVPGMEAHGGYTFCGLAALVILKKERSLNLKSLLQWVTSRQMRFEGGFQGRCNKLVDGCYSFWQAGLLPLLHRALHAQGDPALSMSRWMFHQQALQEYILMCCQCPTGGLLDKPGKSRDFYHTCYCLSGLSIAQHFGSGAMLHDVVLGVPENALQPTHPVYNIGPDKVIQATMHFLQKPVPGFEEHEDEASAEPATD</sequence>
<name>FNTB_BOVIN</name>
<protein>
    <recommendedName>
        <fullName>Protein farnesyltransferase subunit beta</fullName>
        <shortName>FTase-beta</shortName>
        <ecNumber>2.5.1.58</ecNumber>
    </recommendedName>
    <alternativeName>
        <fullName>CAAX farnesyltransferase subunit beta</fullName>
    </alternativeName>
    <alternativeName>
        <fullName>Ras proteins prenyltransferase subunit beta</fullName>
    </alternativeName>
</protein>
<keyword id="KW-0443">Lipid metabolism</keyword>
<keyword id="KW-0479">Metal-binding</keyword>
<keyword id="KW-0597">Phosphoprotein</keyword>
<keyword id="KW-0637">Prenyltransferase</keyword>
<keyword id="KW-1185">Reference proteome</keyword>
<keyword id="KW-0677">Repeat</keyword>
<keyword id="KW-0808">Transferase</keyword>
<keyword id="KW-0862">Zinc</keyword>
<comment type="function">
    <text evidence="1">Essential subunit of the farnesyltransferase complex. Catalyzes the transfer of a farnesyl moiety from farnesyl diphosphate to a cysteine at the fourth position from the C-terminus of several proteins having the C-terminal sequence Cys-aliphatic-aliphatic-X.</text>
</comment>
<comment type="catalytic activity">
    <reaction evidence="1">
        <text>L-cysteinyl-[protein] + (2E,6E)-farnesyl diphosphate = S-(2E,6E)-farnesyl-L-cysteinyl-[protein] + diphosphate</text>
        <dbReference type="Rhea" id="RHEA:13345"/>
        <dbReference type="Rhea" id="RHEA-COMP:10131"/>
        <dbReference type="Rhea" id="RHEA-COMP:11535"/>
        <dbReference type="ChEBI" id="CHEBI:29950"/>
        <dbReference type="ChEBI" id="CHEBI:33019"/>
        <dbReference type="ChEBI" id="CHEBI:86019"/>
        <dbReference type="ChEBI" id="CHEBI:175763"/>
        <dbReference type="EC" id="2.5.1.58"/>
    </reaction>
</comment>
<comment type="cofactor">
    <cofactor evidence="1">
        <name>Zn(2+)</name>
        <dbReference type="ChEBI" id="CHEBI:29105"/>
    </cofactor>
    <text evidence="1">Binds 1 zinc ion per subunit.</text>
</comment>
<comment type="subunit">
    <text evidence="1">Heterodimer of FNTA and FNTB.</text>
</comment>
<comment type="similarity">
    <text evidence="3">Belongs to the protein prenyltransferase subunit beta family.</text>
</comment>
<dbReference type="EC" id="2.5.1.58"/>
<dbReference type="EMBL" id="L00633">
    <property type="protein sequence ID" value="AAA30524.1"/>
    <property type="molecule type" value="mRNA"/>
</dbReference>
<dbReference type="EMBL" id="BC123393">
    <property type="protein sequence ID" value="AAI23394.1"/>
    <property type="molecule type" value="mRNA"/>
</dbReference>
<dbReference type="PIR" id="C49274">
    <property type="entry name" value="C49274"/>
</dbReference>
<dbReference type="RefSeq" id="NP_786999.1">
    <property type="nucleotide sequence ID" value="NM_175805.3"/>
</dbReference>
<dbReference type="SMR" id="P49355"/>
<dbReference type="ComplexPortal" id="CPX-2162">
    <property type="entry name" value="Protein farnesyltransferase complex"/>
</dbReference>
<dbReference type="FunCoup" id="P49355">
    <property type="interactions" value="4334"/>
</dbReference>
<dbReference type="STRING" id="9913.ENSBTAP00000007751"/>
<dbReference type="BindingDB" id="P49355"/>
<dbReference type="ChEMBL" id="CHEMBL2095178"/>
<dbReference type="DrugCentral" id="P49355"/>
<dbReference type="PaxDb" id="9913-ENSBTAP00000007751"/>
<dbReference type="GeneID" id="327686"/>
<dbReference type="KEGG" id="bta:327686"/>
<dbReference type="CTD" id="2342"/>
<dbReference type="VEuPathDB" id="HostDB:ENSBTAG00000005897"/>
<dbReference type="eggNOG" id="KOG0365">
    <property type="taxonomic scope" value="Eukaryota"/>
</dbReference>
<dbReference type="HOGENOM" id="CLU_028946_0_1_1"/>
<dbReference type="InParanoid" id="P49355"/>
<dbReference type="OMA" id="WCIYWIL"/>
<dbReference type="OrthoDB" id="10261146at2759"/>
<dbReference type="TreeFam" id="TF353162"/>
<dbReference type="Reactome" id="R-BTA-2514859">
    <property type="pathway name" value="Inactivation, recovery and regulation of the phototransduction cascade"/>
</dbReference>
<dbReference type="Reactome" id="R-BTA-9648002">
    <property type="pathway name" value="RAS processing"/>
</dbReference>
<dbReference type="PRO" id="PR:P49355"/>
<dbReference type="Proteomes" id="UP000009136">
    <property type="component" value="Chromosome 10"/>
</dbReference>
<dbReference type="Bgee" id="ENSBTAG00000005897">
    <property type="expression patterns" value="Expressed in pons and 103 other cell types or tissues"/>
</dbReference>
<dbReference type="GO" id="GO:0005965">
    <property type="term" value="C:protein farnesyltransferase complex"/>
    <property type="evidence" value="ECO:0000250"/>
    <property type="project" value="UniProtKB"/>
</dbReference>
<dbReference type="GO" id="GO:0004660">
    <property type="term" value="F:protein farnesyltransferase activity"/>
    <property type="evidence" value="ECO:0000250"/>
    <property type="project" value="UniProtKB"/>
</dbReference>
<dbReference type="GO" id="GO:0008270">
    <property type="term" value="F:zinc ion binding"/>
    <property type="evidence" value="ECO:0000250"/>
    <property type="project" value="UniProtKB"/>
</dbReference>
<dbReference type="GO" id="GO:0006629">
    <property type="term" value="P:lipid metabolic process"/>
    <property type="evidence" value="ECO:0007669"/>
    <property type="project" value="UniProtKB-KW"/>
</dbReference>
<dbReference type="GO" id="GO:0018343">
    <property type="term" value="P:protein farnesylation"/>
    <property type="evidence" value="ECO:0000250"/>
    <property type="project" value="UniProtKB"/>
</dbReference>
<dbReference type="CDD" id="cd02893">
    <property type="entry name" value="FTase"/>
    <property type="match status" value="1"/>
</dbReference>
<dbReference type="FunFam" id="1.50.10.20:FF:000007">
    <property type="entry name" value="Protein farnesyltransferase subunit beta"/>
    <property type="match status" value="1"/>
</dbReference>
<dbReference type="Gene3D" id="1.50.10.20">
    <property type="match status" value="1"/>
</dbReference>
<dbReference type="InterPro" id="IPR026872">
    <property type="entry name" value="FTB"/>
</dbReference>
<dbReference type="InterPro" id="IPR045089">
    <property type="entry name" value="PGGT1B-like"/>
</dbReference>
<dbReference type="InterPro" id="IPR001330">
    <property type="entry name" value="Prenyltrans"/>
</dbReference>
<dbReference type="InterPro" id="IPR008930">
    <property type="entry name" value="Terpenoid_cyclase/PrenylTrfase"/>
</dbReference>
<dbReference type="PANTHER" id="PTHR11774">
    <property type="entry name" value="GERANYLGERANYL TRANSFERASE TYPE BETA SUBUNIT"/>
    <property type="match status" value="1"/>
</dbReference>
<dbReference type="PANTHER" id="PTHR11774:SF6">
    <property type="entry name" value="PROTEIN FARNESYLTRANSFERASE SUBUNIT BETA"/>
    <property type="match status" value="1"/>
</dbReference>
<dbReference type="Pfam" id="PF00432">
    <property type="entry name" value="Prenyltrans"/>
    <property type="match status" value="1"/>
</dbReference>
<dbReference type="SFLD" id="SFLDG01015">
    <property type="entry name" value="Prenyltransferase_Like_1"/>
    <property type="match status" value="1"/>
</dbReference>
<dbReference type="SUPFAM" id="SSF48239">
    <property type="entry name" value="Terpenoid cyclases/Protein prenyltransferases"/>
    <property type="match status" value="1"/>
</dbReference>
<feature type="chain" id="PRO_0000119760" description="Protein farnesyltransferase subunit beta">
    <location>
        <begin position="1"/>
        <end position="437"/>
    </location>
</feature>
<feature type="repeat" description="PFTB 1">
    <location>
        <begin position="123"/>
        <end position="164"/>
    </location>
</feature>
<feature type="repeat" description="PFTB 2">
    <location>
        <begin position="174"/>
        <end position="215"/>
    </location>
</feature>
<feature type="repeat" description="PFTB 3">
    <location>
        <begin position="222"/>
        <end position="263"/>
    </location>
</feature>
<feature type="repeat" description="PFTB 4">
    <location>
        <begin position="270"/>
        <end position="312"/>
    </location>
</feature>
<feature type="repeat" description="PFTB 5">
    <location>
        <begin position="332"/>
        <end position="374"/>
    </location>
</feature>
<feature type="binding site" evidence="1">
    <location>
        <begin position="248"/>
        <end position="251"/>
    </location>
    <ligand>
        <name>(2E,6E)-farnesyl diphosphate</name>
        <dbReference type="ChEBI" id="CHEBI:175763"/>
    </ligand>
</feature>
<feature type="binding site" evidence="1">
    <location>
        <begin position="291"/>
        <end position="294"/>
    </location>
    <ligand>
        <name>(2E,6E)-farnesyl diphosphate</name>
        <dbReference type="ChEBI" id="CHEBI:175763"/>
    </ligand>
</feature>
<feature type="binding site" evidence="1">
    <location>
        <position position="297"/>
    </location>
    <ligand>
        <name>Zn(2+)</name>
        <dbReference type="ChEBI" id="CHEBI:29105"/>
        <note>catalytic</note>
    </ligand>
</feature>
<feature type="binding site" evidence="1">
    <location>
        <position position="299"/>
    </location>
    <ligand>
        <name>Zn(2+)</name>
        <dbReference type="ChEBI" id="CHEBI:29105"/>
        <note>catalytic</note>
    </ligand>
</feature>
<feature type="binding site" evidence="1">
    <location>
        <begin position="300"/>
        <end position="303"/>
    </location>
    <ligand>
        <name>(2E,6E)-farnesyl diphosphate</name>
        <dbReference type="ChEBI" id="CHEBI:175763"/>
    </ligand>
</feature>
<feature type="binding site" evidence="1">
    <location>
        <position position="362"/>
    </location>
    <ligand>
        <name>Zn(2+)</name>
        <dbReference type="ChEBI" id="CHEBI:29105"/>
        <note>catalytic</note>
    </ligand>
</feature>
<feature type="site" description="Important for selectivity against geranylgeranyl diphosphate" evidence="1">
    <location>
        <position position="102"/>
    </location>
</feature>
<feature type="modified residue" description="Phosphothreonine" evidence="2">
    <location>
        <position position="436"/>
    </location>
</feature>
<evidence type="ECO:0000250" key="1">
    <source>
        <dbReference type="UniProtKB" id="P49356"/>
    </source>
</evidence>
<evidence type="ECO:0000250" key="2">
    <source>
        <dbReference type="UniProtKB" id="Q8K2I1"/>
    </source>
</evidence>
<evidence type="ECO:0000305" key="3"/>
<accession>P49355</accession>
<accession>A4FUX0</accession>
<accession>Q9TS25</accession>
<reference key="1">
    <citation type="journal article" date="1993" name="Biochemistry">
        <title>Characterization of recombinant human farnesyl-protein transferase: cloning, expression, farnesyl diphosphate binding, and functional homology with yeast prenyl-protein transferases.</title>
        <authorList>
            <person name="Omer C.A."/>
            <person name="Kral A.M."/>
            <person name="Diehl R.E."/>
            <person name="Prendergast G.C."/>
            <person name="Powers S."/>
            <person name="Allen C.M."/>
            <person name="Gibbs J.B."/>
            <person name="Kohl N.E."/>
        </authorList>
    </citation>
    <scope>NUCLEOTIDE SEQUENCE [MRNA]</scope>
    <source>
        <tissue>Brain</tissue>
    </source>
</reference>
<reference key="2">
    <citation type="submission" date="2006-09" db="EMBL/GenBank/DDBJ databases">
        <authorList>
            <consortium name="NIH - Mammalian Gene Collection (MGC) project"/>
        </authorList>
    </citation>
    <scope>NUCLEOTIDE SEQUENCE [LARGE SCALE MRNA]</scope>
    <source>
        <strain>Hereford</strain>
        <tissue>Hippocampus</tissue>
    </source>
</reference>
<gene>
    <name type="primary">FNTB</name>
</gene>
<proteinExistence type="evidence at transcript level"/>
<organism>
    <name type="scientific">Bos taurus</name>
    <name type="common">Bovine</name>
    <dbReference type="NCBI Taxonomy" id="9913"/>
    <lineage>
        <taxon>Eukaryota</taxon>
        <taxon>Metazoa</taxon>
        <taxon>Chordata</taxon>
        <taxon>Craniata</taxon>
        <taxon>Vertebrata</taxon>
        <taxon>Euteleostomi</taxon>
        <taxon>Mammalia</taxon>
        <taxon>Eutheria</taxon>
        <taxon>Laurasiatheria</taxon>
        <taxon>Artiodactyla</taxon>
        <taxon>Ruminantia</taxon>
        <taxon>Pecora</taxon>
        <taxon>Bovidae</taxon>
        <taxon>Bovinae</taxon>
        <taxon>Bos</taxon>
    </lineage>
</organism>